<comment type="function">
    <text evidence="2">Required for correct meiotic chromosome segregation. Appears to also have role in sporulation.</text>
</comment>
<comment type="subcellular location">
    <subcellularLocation>
        <location evidence="3">Mitochondrion membrane</location>
        <topology evidence="3">Multi-pass membrane protein</topology>
    </subcellularLocation>
</comment>
<gene>
    <name type="primary">mug99</name>
    <name type="ORF">SPAC1610.04</name>
</gene>
<evidence type="ECO:0000255" key="1"/>
<evidence type="ECO:0000269" key="2">
    <source>
    </source>
</evidence>
<evidence type="ECO:0000305" key="3"/>
<name>MUG99_SCHPO</name>
<proteinExistence type="evidence at protein level"/>
<protein>
    <recommendedName>
        <fullName>Meiotically up-regulated gene 99 protein, mitochondrial</fullName>
    </recommendedName>
</protein>
<reference key="1">
    <citation type="journal article" date="2002" name="Nature">
        <title>The genome sequence of Schizosaccharomyces pombe.</title>
        <authorList>
            <person name="Wood V."/>
            <person name="Gwilliam R."/>
            <person name="Rajandream M.A."/>
            <person name="Lyne M.H."/>
            <person name="Lyne R."/>
            <person name="Stewart A."/>
            <person name="Sgouros J.G."/>
            <person name="Peat N."/>
            <person name="Hayles J."/>
            <person name="Baker S.G."/>
            <person name="Basham D."/>
            <person name="Bowman S."/>
            <person name="Brooks K."/>
            <person name="Brown D."/>
            <person name="Brown S."/>
            <person name="Chillingworth T."/>
            <person name="Churcher C.M."/>
            <person name="Collins M."/>
            <person name="Connor R."/>
            <person name="Cronin A."/>
            <person name="Davis P."/>
            <person name="Feltwell T."/>
            <person name="Fraser A."/>
            <person name="Gentles S."/>
            <person name="Goble A."/>
            <person name="Hamlin N."/>
            <person name="Harris D.E."/>
            <person name="Hidalgo J."/>
            <person name="Hodgson G."/>
            <person name="Holroyd S."/>
            <person name="Hornsby T."/>
            <person name="Howarth S."/>
            <person name="Huckle E.J."/>
            <person name="Hunt S."/>
            <person name="Jagels K."/>
            <person name="James K.D."/>
            <person name="Jones L."/>
            <person name="Jones M."/>
            <person name="Leather S."/>
            <person name="McDonald S."/>
            <person name="McLean J."/>
            <person name="Mooney P."/>
            <person name="Moule S."/>
            <person name="Mungall K.L."/>
            <person name="Murphy L.D."/>
            <person name="Niblett D."/>
            <person name="Odell C."/>
            <person name="Oliver K."/>
            <person name="O'Neil S."/>
            <person name="Pearson D."/>
            <person name="Quail M.A."/>
            <person name="Rabbinowitsch E."/>
            <person name="Rutherford K.M."/>
            <person name="Rutter S."/>
            <person name="Saunders D."/>
            <person name="Seeger K."/>
            <person name="Sharp S."/>
            <person name="Skelton J."/>
            <person name="Simmonds M.N."/>
            <person name="Squares R."/>
            <person name="Squares S."/>
            <person name="Stevens K."/>
            <person name="Taylor K."/>
            <person name="Taylor R.G."/>
            <person name="Tivey A."/>
            <person name="Walsh S.V."/>
            <person name="Warren T."/>
            <person name="Whitehead S."/>
            <person name="Woodward J.R."/>
            <person name="Volckaert G."/>
            <person name="Aert R."/>
            <person name="Robben J."/>
            <person name="Grymonprez B."/>
            <person name="Weltjens I."/>
            <person name="Vanstreels E."/>
            <person name="Rieger M."/>
            <person name="Schaefer M."/>
            <person name="Mueller-Auer S."/>
            <person name="Gabel C."/>
            <person name="Fuchs M."/>
            <person name="Duesterhoeft A."/>
            <person name="Fritzc C."/>
            <person name="Holzer E."/>
            <person name="Moestl D."/>
            <person name="Hilbert H."/>
            <person name="Borzym K."/>
            <person name="Langer I."/>
            <person name="Beck A."/>
            <person name="Lehrach H."/>
            <person name="Reinhardt R."/>
            <person name="Pohl T.M."/>
            <person name="Eger P."/>
            <person name="Zimmermann W."/>
            <person name="Wedler H."/>
            <person name="Wambutt R."/>
            <person name="Purnelle B."/>
            <person name="Goffeau A."/>
            <person name="Cadieu E."/>
            <person name="Dreano S."/>
            <person name="Gloux S."/>
            <person name="Lelaure V."/>
            <person name="Mottier S."/>
            <person name="Galibert F."/>
            <person name="Aves S.J."/>
            <person name="Xiang Z."/>
            <person name="Hunt C."/>
            <person name="Moore K."/>
            <person name="Hurst S.M."/>
            <person name="Lucas M."/>
            <person name="Rochet M."/>
            <person name="Gaillardin C."/>
            <person name="Tallada V.A."/>
            <person name="Garzon A."/>
            <person name="Thode G."/>
            <person name="Daga R.R."/>
            <person name="Cruzado L."/>
            <person name="Jimenez J."/>
            <person name="Sanchez M."/>
            <person name="del Rey F."/>
            <person name="Benito J."/>
            <person name="Dominguez A."/>
            <person name="Revuelta J.L."/>
            <person name="Moreno S."/>
            <person name="Armstrong J."/>
            <person name="Forsburg S.L."/>
            <person name="Cerutti L."/>
            <person name="Lowe T."/>
            <person name="McCombie W.R."/>
            <person name="Paulsen I."/>
            <person name="Potashkin J."/>
            <person name="Shpakovski G.V."/>
            <person name="Ussery D."/>
            <person name="Barrell B.G."/>
            <person name="Nurse P."/>
        </authorList>
    </citation>
    <scope>NUCLEOTIDE SEQUENCE [LARGE SCALE GENOMIC DNA]</scope>
    <source>
        <strain>972 / ATCC 24843</strain>
    </source>
</reference>
<reference key="2">
    <citation type="journal article" date="2005" name="Curr. Biol.">
        <title>A large-scale screen in S. pombe identifies seven novel genes required for critical meiotic events.</title>
        <authorList>
            <person name="Martin-Castellanos C."/>
            <person name="Blanco M."/>
            <person name="Rozalen A.E."/>
            <person name="Perez-Hidalgo L."/>
            <person name="Garcia A.I."/>
            <person name="Conde F."/>
            <person name="Mata J."/>
            <person name="Ellermeier C."/>
            <person name="Davis L."/>
            <person name="San-Segundo P."/>
            <person name="Smith G.R."/>
            <person name="Moreno S."/>
        </authorList>
    </citation>
    <scope>FUNCTION IN MEIOSIS/SPORULATION</scope>
</reference>
<reference key="3">
    <citation type="journal article" date="2006" name="Nat. Biotechnol.">
        <title>ORFeome cloning and global analysis of protein localization in the fission yeast Schizosaccharomyces pombe.</title>
        <authorList>
            <person name="Matsuyama A."/>
            <person name="Arai R."/>
            <person name="Yashiroda Y."/>
            <person name="Shirai A."/>
            <person name="Kamata A."/>
            <person name="Sekido S."/>
            <person name="Kobayashi Y."/>
            <person name="Hashimoto A."/>
            <person name="Hamamoto M."/>
            <person name="Hiraoka Y."/>
            <person name="Horinouchi S."/>
            <person name="Yoshida M."/>
        </authorList>
    </citation>
    <scope>SUBCELLULAR LOCATION [LARGE SCALE ANALYSIS]</scope>
</reference>
<sequence length="526" mass="60243">MLRFGIKTWKRSVLAIRRSSTAPHVQIISNLQKKLLNELYSLRRLVDDNSPATIRVGNVSLLLSKSNIRRRIALQALSSSAEDVACVKQITHALLAAPFMPESKELKYAMDHNGLNPLYISFGTNALFERNARYSTSHLFLPSDFLQVNNLEIIHLPPGTVDSDILASCHARYICSTSYLRMTSSDFTTADTLVLDIDPKLHSLLKNEKSIIPVSSSAALKATKALQDDPHNFQNYQNQWEQSGFQQLRTNMTPTSDLEICKRFLNYLCCSFSLTKAEKDLVRATEFSNSMLISIEKWAKYCDVDLQEFEKKLQKFWKNFGTLKLYSNIESLPASLKQLIKDEYLQKSKLELSFILGELSKNGDDKNNFELAMKDFGTFQNSRMSAVDQALQPLRRKTLYTTAFQGLGALGSLYLYFVSHFSLYNAFSVFSVCGVFGLYYLQSSYRSWKKEYWKELLEEGRKFERQLCRNVFGRSSFYVQQKTAAEKKEHISLIMKKLTKTLDLMKEFQLQSSFSDSPTASKKQLL</sequence>
<keyword id="KW-0159">Chromosome partition</keyword>
<keyword id="KW-0469">Meiosis</keyword>
<keyword id="KW-0472">Membrane</keyword>
<keyword id="KW-0496">Mitochondrion</keyword>
<keyword id="KW-1185">Reference proteome</keyword>
<keyword id="KW-0749">Sporulation</keyword>
<keyword id="KW-0809">Transit peptide</keyword>
<keyword id="KW-0812">Transmembrane</keyword>
<keyword id="KW-1133">Transmembrane helix</keyword>
<dbReference type="EMBL" id="CU329670">
    <property type="protein sequence ID" value="CAB90311.1"/>
    <property type="molecule type" value="Genomic_DNA"/>
</dbReference>
<dbReference type="RefSeq" id="NP_593487.1">
    <property type="nucleotide sequence ID" value="NM_001018921.2"/>
</dbReference>
<dbReference type="iPTMnet" id="Q9P6M7"/>
<dbReference type="PaxDb" id="4896-SPAC1610.04.1"/>
<dbReference type="EnsemblFungi" id="SPAC1610.04.1">
    <property type="protein sequence ID" value="SPAC1610.04.1:pep"/>
    <property type="gene ID" value="SPAC1610.04"/>
</dbReference>
<dbReference type="GeneID" id="2542794"/>
<dbReference type="KEGG" id="spo:2542794"/>
<dbReference type="PomBase" id="SPAC1610.04">
    <property type="gene designation" value="mug99"/>
</dbReference>
<dbReference type="VEuPathDB" id="FungiDB:SPAC1610.04"/>
<dbReference type="eggNOG" id="ENOG502S99Q">
    <property type="taxonomic scope" value="Eukaryota"/>
</dbReference>
<dbReference type="HOGENOM" id="CLU_517917_0_0_1"/>
<dbReference type="InParanoid" id="Q9P6M7"/>
<dbReference type="OMA" id="MCSSSYL"/>
<dbReference type="PRO" id="PR:Q9P6M7"/>
<dbReference type="Proteomes" id="UP000002485">
    <property type="component" value="Chromosome I"/>
</dbReference>
<dbReference type="GO" id="GO:0099617">
    <property type="term" value="C:matrix side of mitochondrial inner membrane"/>
    <property type="evidence" value="ECO:0000269"/>
    <property type="project" value="PomBase"/>
</dbReference>
<dbReference type="GO" id="GO:0044284">
    <property type="term" value="C:mitochondrial crista junction"/>
    <property type="evidence" value="ECO:0000269"/>
    <property type="project" value="PomBase"/>
</dbReference>
<dbReference type="GO" id="GO:0005739">
    <property type="term" value="C:mitochondrion"/>
    <property type="evidence" value="ECO:0000314"/>
    <property type="project" value="PomBase"/>
</dbReference>
<dbReference type="GO" id="GO:0007059">
    <property type="term" value="P:chromosome segregation"/>
    <property type="evidence" value="ECO:0007669"/>
    <property type="project" value="UniProtKB-KW"/>
</dbReference>
<dbReference type="GO" id="GO:0042407">
    <property type="term" value="P:cristae formation"/>
    <property type="evidence" value="ECO:0000315"/>
    <property type="project" value="PomBase"/>
</dbReference>
<dbReference type="GO" id="GO:0051321">
    <property type="term" value="P:meiotic cell cycle"/>
    <property type="evidence" value="ECO:0007669"/>
    <property type="project" value="UniProtKB-KW"/>
</dbReference>
<dbReference type="GO" id="GO:0030435">
    <property type="term" value="P:sporulation resulting in formation of a cellular spore"/>
    <property type="evidence" value="ECO:0007669"/>
    <property type="project" value="UniProtKB-KW"/>
</dbReference>
<dbReference type="InterPro" id="IPR056196">
    <property type="entry name" value="Mmc1_C"/>
</dbReference>
<dbReference type="Pfam" id="PF23868">
    <property type="entry name" value="Mmc1_C"/>
    <property type="match status" value="1"/>
</dbReference>
<organism>
    <name type="scientific">Schizosaccharomyces pombe (strain 972 / ATCC 24843)</name>
    <name type="common">Fission yeast</name>
    <dbReference type="NCBI Taxonomy" id="284812"/>
    <lineage>
        <taxon>Eukaryota</taxon>
        <taxon>Fungi</taxon>
        <taxon>Dikarya</taxon>
        <taxon>Ascomycota</taxon>
        <taxon>Taphrinomycotina</taxon>
        <taxon>Schizosaccharomycetes</taxon>
        <taxon>Schizosaccharomycetales</taxon>
        <taxon>Schizosaccharomycetaceae</taxon>
        <taxon>Schizosaccharomyces</taxon>
    </lineage>
</organism>
<accession>Q9P6M7</accession>
<feature type="transit peptide" description="Mitochondrion" evidence="1">
    <location>
        <begin position="1"/>
        <end status="unknown"/>
    </location>
</feature>
<feature type="chain" id="PRO_0000278618" description="Meiotically up-regulated gene 99 protein, mitochondrial">
    <location>
        <begin status="unknown"/>
        <end position="526"/>
    </location>
</feature>
<feature type="transmembrane region" description="Helical" evidence="1">
    <location>
        <begin position="398"/>
        <end position="418"/>
    </location>
</feature>
<feature type="transmembrane region" description="Helical" evidence="1">
    <location>
        <begin position="421"/>
        <end position="441"/>
    </location>
</feature>